<feature type="signal peptide" evidence="2">
    <location>
        <begin position="1"/>
        <end position="16"/>
    </location>
</feature>
<feature type="propeptide" id="PRO_0000028897" description="Activation peptide" evidence="2">
    <location>
        <begin position="17"/>
        <end position="93"/>
    </location>
</feature>
<feature type="chain" id="PRO_0000028898" description="Blastula protease 10">
    <location>
        <begin position="94"/>
        <end position="597"/>
    </location>
</feature>
<feature type="domain" description="Peptidase M12A" evidence="5">
    <location>
        <begin position="93"/>
        <end position="294"/>
    </location>
</feature>
<feature type="domain" description="EGF-like" evidence="4">
    <location>
        <begin position="295"/>
        <end position="329"/>
    </location>
</feature>
<feature type="domain" description="CUB 1" evidence="3">
    <location>
        <begin position="339"/>
        <end position="449"/>
    </location>
</feature>
<feature type="domain" description="CUB 2" evidence="3">
    <location>
        <begin position="484"/>
        <end position="595"/>
    </location>
</feature>
<feature type="region of interest" description="Disordered" evidence="6">
    <location>
        <begin position="24"/>
        <end position="67"/>
    </location>
</feature>
<feature type="active site" evidence="5">
    <location>
        <position position="191"/>
    </location>
</feature>
<feature type="binding site" evidence="5">
    <location>
        <position position="190"/>
    </location>
    <ligand>
        <name>Zn(2+)</name>
        <dbReference type="ChEBI" id="CHEBI:29105"/>
        <note>catalytic</note>
    </ligand>
</feature>
<feature type="binding site" evidence="5">
    <location>
        <position position="194"/>
    </location>
    <ligand>
        <name>Zn(2+)</name>
        <dbReference type="ChEBI" id="CHEBI:29105"/>
        <note>catalytic</note>
    </ligand>
</feature>
<feature type="binding site" evidence="5">
    <location>
        <position position="200"/>
    </location>
    <ligand>
        <name>Zn(2+)</name>
        <dbReference type="ChEBI" id="CHEBI:29105"/>
        <note>catalytic</note>
    </ligand>
</feature>
<feature type="disulfide bond" evidence="5">
    <location>
        <begin position="134"/>
        <end position="293"/>
    </location>
</feature>
<feature type="disulfide bond" evidence="5">
    <location>
        <begin position="162"/>
        <end position="182"/>
    </location>
</feature>
<feature type="disulfide bond" evidence="1">
    <location>
        <begin position="299"/>
        <end position="315"/>
    </location>
</feature>
<feature type="disulfide bond" evidence="1">
    <location>
        <begin position="305"/>
        <end position="317"/>
    </location>
</feature>
<feature type="disulfide bond" evidence="1">
    <location>
        <begin position="319"/>
        <end position="328"/>
    </location>
</feature>
<feature type="disulfide bond" evidence="1">
    <location>
        <begin position="339"/>
        <end position="365"/>
    </location>
</feature>
<feature type="disulfide bond" evidence="1">
    <location>
        <begin position="392"/>
        <end position="412"/>
    </location>
</feature>
<feature type="disulfide bond" evidence="1">
    <location>
        <begin position="484"/>
        <end position="510"/>
    </location>
</feature>
<feature type="disulfide bond" evidence="1">
    <location>
        <begin position="537"/>
        <end position="557"/>
    </location>
</feature>
<keyword id="KW-0165">Cleavage on pair of basic residues</keyword>
<keyword id="KW-0963">Cytoplasm</keyword>
<keyword id="KW-1015">Disulfide bond</keyword>
<keyword id="KW-0245">EGF-like domain</keyword>
<keyword id="KW-0378">Hydrolase</keyword>
<keyword id="KW-0479">Metal-binding</keyword>
<keyword id="KW-0482">Metalloprotease</keyword>
<keyword id="KW-0645">Protease</keyword>
<keyword id="KW-0677">Repeat</keyword>
<keyword id="KW-0964">Secreted</keyword>
<keyword id="KW-0732">Signal</keyword>
<keyword id="KW-0862">Zinc</keyword>
<keyword id="KW-0865">Zymogen</keyword>
<sequence length="597" mass="66176">MKLILFLSGLVSLVLCTLAAPTGDQKEIHTETPPPKKPSETTTPGALKTPQPEPKDEEPTPGAFQGDMMLTEDQQRESKEAIDDEMTGRKKRKATIYESQRWPYKVIPYVISPSSSGQSSLIRNAMDHWEQNTCLRFEPRTSSHSRQLGHNAYLSFFRGSGCWSYVGKAFNGEQQISIGNGCAYFGTIVHEIGHAIGFHHEQSRPDRDDYINVLYQNIQSGRQHNFAKYTWGRVTSRNVEYDVGSIMHYGGYGFSSNGRPTITTRDPRLNSRLGQRIALSPADIELANLIYECDDIEDCAGANECLNGGYHDTECNCVCPSGYNGDLCEDAVTTTRPDCSERFTEMTGVITSPNWPGRYEDNMACVYQIEGPPGSTIELTFTEMNIENHAACRYDAVEVRKDDINSDGEKFCGNTLPAVQISSGNQMLISFTSDPSITGRGFRATYRIVILTTTQIPDTTTISTTTPVPTTTQATTDETVVGSCGGSFGGTQGRVATPNYPNNYDNDLECVYVIEVEIGRRVELDFIDFVLEDETNCRWDSLSINLGDGIKIDMKMCGREYPAASLVSIGNNMELTLISDRSVTDRGFMADYRAIDL</sequence>
<comment type="function">
    <text>Could be involved in the differentiation of ectodermal lineages and subsequent patterning of the embryo.</text>
</comment>
<comment type="cofactor">
    <cofactor evidence="5">
        <name>Zn(2+)</name>
        <dbReference type="ChEBI" id="CHEBI:29105"/>
    </cofactor>
    <text evidence="5">Binds 1 zinc ion per subunit.</text>
</comment>
<comment type="subcellular location">
    <subcellularLocation>
        <location>Cytoplasm</location>
        <location>Perinuclear region</location>
    </subcellularLocation>
    <subcellularLocation>
        <location>Cytoplasm</location>
        <location>Cell cortex</location>
    </subcellularLocation>
    <subcellularLocation>
        <location>Secreted</location>
        <location>Extracellular space</location>
    </subcellularLocation>
    <text>First detected in a perinuclear region, then in an apical and submembranous position just before its secretion into the perivitelline space.</text>
</comment>
<comment type="developmental stage">
    <text>Embryonic. The protein is first detected in early blastula stages, its level peaks in late cleavage, declines abruptly before ingression of primary mesenchyme cells and remains constant in late development.</text>
</comment>
<organism>
    <name type="scientific">Paracentrotus lividus</name>
    <name type="common">Common sea urchin</name>
    <dbReference type="NCBI Taxonomy" id="7656"/>
    <lineage>
        <taxon>Eukaryota</taxon>
        <taxon>Metazoa</taxon>
        <taxon>Echinodermata</taxon>
        <taxon>Eleutherozoa</taxon>
        <taxon>Echinozoa</taxon>
        <taxon>Echinoidea</taxon>
        <taxon>Euechinoidea</taxon>
        <taxon>Echinacea</taxon>
        <taxon>Camarodonta</taxon>
        <taxon>Echinidea</taxon>
        <taxon>Echinidae</taxon>
        <taxon>Paracentrotus</taxon>
    </lineage>
</organism>
<accession>P42674</accession>
<dbReference type="EC" id="3.4.24.-"/>
<dbReference type="EMBL" id="X56224">
    <property type="protein sequence ID" value="CAA39673.1"/>
    <property type="molecule type" value="mRNA"/>
</dbReference>
<dbReference type="SMR" id="P42674"/>
<dbReference type="MEROPS" id="M12.012"/>
<dbReference type="GO" id="GO:0005938">
    <property type="term" value="C:cell cortex"/>
    <property type="evidence" value="ECO:0007669"/>
    <property type="project" value="UniProtKB-SubCell"/>
</dbReference>
<dbReference type="GO" id="GO:0005576">
    <property type="term" value="C:extracellular region"/>
    <property type="evidence" value="ECO:0007669"/>
    <property type="project" value="UniProtKB-SubCell"/>
</dbReference>
<dbReference type="GO" id="GO:0048471">
    <property type="term" value="C:perinuclear region of cytoplasm"/>
    <property type="evidence" value="ECO:0007669"/>
    <property type="project" value="UniProtKB-SubCell"/>
</dbReference>
<dbReference type="GO" id="GO:0004222">
    <property type="term" value="F:metalloendopeptidase activity"/>
    <property type="evidence" value="ECO:0007669"/>
    <property type="project" value="InterPro"/>
</dbReference>
<dbReference type="GO" id="GO:0008270">
    <property type="term" value="F:zinc ion binding"/>
    <property type="evidence" value="ECO:0007669"/>
    <property type="project" value="InterPro"/>
</dbReference>
<dbReference type="GO" id="GO:0006508">
    <property type="term" value="P:proteolysis"/>
    <property type="evidence" value="ECO:0007669"/>
    <property type="project" value="UniProtKB-KW"/>
</dbReference>
<dbReference type="CDD" id="cd00041">
    <property type="entry name" value="CUB"/>
    <property type="match status" value="2"/>
</dbReference>
<dbReference type="CDD" id="cd04280">
    <property type="entry name" value="ZnMc_astacin_like"/>
    <property type="match status" value="1"/>
</dbReference>
<dbReference type="FunFam" id="2.60.120.290:FF:000013">
    <property type="entry name" value="Membrane frizzled-related protein"/>
    <property type="match status" value="2"/>
</dbReference>
<dbReference type="FunFam" id="3.40.390.10:FF:000028">
    <property type="entry name" value="Zinc metalloproteinase"/>
    <property type="match status" value="1"/>
</dbReference>
<dbReference type="Gene3D" id="3.40.390.10">
    <property type="entry name" value="Collagenase (Catalytic Domain)"/>
    <property type="match status" value="1"/>
</dbReference>
<dbReference type="Gene3D" id="2.60.120.290">
    <property type="entry name" value="Spermadhesin, CUB domain"/>
    <property type="match status" value="2"/>
</dbReference>
<dbReference type="InterPro" id="IPR034035">
    <property type="entry name" value="Astacin-like_dom"/>
</dbReference>
<dbReference type="InterPro" id="IPR000859">
    <property type="entry name" value="CUB_dom"/>
</dbReference>
<dbReference type="InterPro" id="IPR000742">
    <property type="entry name" value="EGF-like_dom"/>
</dbReference>
<dbReference type="InterPro" id="IPR024079">
    <property type="entry name" value="MetalloPept_cat_dom_sf"/>
</dbReference>
<dbReference type="InterPro" id="IPR001506">
    <property type="entry name" value="Peptidase_M12A"/>
</dbReference>
<dbReference type="InterPro" id="IPR006026">
    <property type="entry name" value="Peptidase_Metallo"/>
</dbReference>
<dbReference type="InterPro" id="IPR017369">
    <property type="entry name" value="SPAN/blastula_protease_10"/>
</dbReference>
<dbReference type="InterPro" id="IPR035914">
    <property type="entry name" value="Sperma_CUB_dom_sf"/>
</dbReference>
<dbReference type="PANTHER" id="PTHR10127">
    <property type="entry name" value="DISCOIDIN, CUB, EGF, LAMININ , AND ZINC METALLOPROTEASE DOMAIN CONTAINING"/>
    <property type="match status" value="1"/>
</dbReference>
<dbReference type="PANTHER" id="PTHR10127:SF780">
    <property type="entry name" value="METALLOENDOPEPTIDASE"/>
    <property type="match status" value="1"/>
</dbReference>
<dbReference type="Pfam" id="PF01400">
    <property type="entry name" value="Astacin"/>
    <property type="match status" value="1"/>
</dbReference>
<dbReference type="Pfam" id="PF00431">
    <property type="entry name" value="CUB"/>
    <property type="match status" value="2"/>
</dbReference>
<dbReference type="PIRSF" id="PIRSF038056">
    <property type="entry name" value="BP10_SPAN"/>
    <property type="match status" value="1"/>
</dbReference>
<dbReference type="PRINTS" id="PR00480">
    <property type="entry name" value="ASTACIN"/>
</dbReference>
<dbReference type="SMART" id="SM00042">
    <property type="entry name" value="CUB"/>
    <property type="match status" value="2"/>
</dbReference>
<dbReference type="SMART" id="SM00235">
    <property type="entry name" value="ZnMc"/>
    <property type="match status" value="1"/>
</dbReference>
<dbReference type="SUPFAM" id="SSF55486">
    <property type="entry name" value="Metalloproteases ('zincins'), catalytic domain"/>
    <property type="match status" value="1"/>
</dbReference>
<dbReference type="SUPFAM" id="SSF49854">
    <property type="entry name" value="Spermadhesin, CUB domain"/>
    <property type="match status" value="2"/>
</dbReference>
<dbReference type="PROSITE" id="PS51864">
    <property type="entry name" value="ASTACIN"/>
    <property type="match status" value="1"/>
</dbReference>
<dbReference type="PROSITE" id="PS01180">
    <property type="entry name" value="CUB"/>
    <property type="match status" value="2"/>
</dbReference>
<dbReference type="PROSITE" id="PS00022">
    <property type="entry name" value="EGF_1"/>
    <property type="match status" value="1"/>
</dbReference>
<dbReference type="PROSITE" id="PS01186">
    <property type="entry name" value="EGF_2"/>
    <property type="match status" value="1"/>
</dbReference>
<dbReference type="PROSITE" id="PS50026">
    <property type="entry name" value="EGF_3"/>
    <property type="match status" value="1"/>
</dbReference>
<dbReference type="PROSITE" id="PS00142">
    <property type="entry name" value="ZINC_PROTEASE"/>
    <property type="match status" value="1"/>
</dbReference>
<gene>
    <name type="primary">BP10</name>
</gene>
<reference key="1">
    <citation type="journal article" date="1992" name="Development">
        <title>Spatial and temporal expression pattern during sea urchin embryogenesis of a gene coding for a protease homologous to the human protein BMP-1 and to the product of the Drosophila dorsal-ventral patterning gene tolloid.</title>
        <authorList>
            <person name="Lepage T."/>
            <person name="Ghiglione C."/>
            <person name="Gache C."/>
        </authorList>
    </citation>
    <scope>NUCLEOTIDE SEQUENCE [MRNA]</scope>
</reference>
<protein>
    <recommendedName>
        <fullName>Blastula protease 10</fullName>
        <ecNumber>3.4.24.-</ecNumber>
    </recommendedName>
</protein>
<proteinExistence type="evidence at transcript level"/>
<evidence type="ECO:0000250" key="1"/>
<evidence type="ECO:0000255" key="2"/>
<evidence type="ECO:0000255" key="3">
    <source>
        <dbReference type="PROSITE-ProRule" id="PRU00059"/>
    </source>
</evidence>
<evidence type="ECO:0000255" key="4">
    <source>
        <dbReference type="PROSITE-ProRule" id="PRU00076"/>
    </source>
</evidence>
<evidence type="ECO:0000255" key="5">
    <source>
        <dbReference type="PROSITE-ProRule" id="PRU01211"/>
    </source>
</evidence>
<evidence type="ECO:0000256" key="6">
    <source>
        <dbReference type="SAM" id="MobiDB-lite"/>
    </source>
</evidence>
<name>BP10_PARLI</name>